<sequence length="126" mass="14078">MIFGTGIDIVDITRFDRLVEEGNVRLFERLFTPHEMEYCAGKARSSQHYALRFAAKEAFLKACGLGLREGMTWHDVEVVNDTLGKPELKLHGKALKLATDLSLSRTFVSLSHDGAYAVALVVLERP</sequence>
<proteinExistence type="inferred from homology"/>
<accession>Q74C71</accession>
<organism>
    <name type="scientific">Geobacter sulfurreducens (strain ATCC 51573 / DSM 12127 / PCA)</name>
    <dbReference type="NCBI Taxonomy" id="243231"/>
    <lineage>
        <taxon>Bacteria</taxon>
        <taxon>Pseudomonadati</taxon>
        <taxon>Thermodesulfobacteriota</taxon>
        <taxon>Desulfuromonadia</taxon>
        <taxon>Geobacterales</taxon>
        <taxon>Geobacteraceae</taxon>
        <taxon>Geobacter</taxon>
    </lineage>
</organism>
<protein>
    <recommendedName>
        <fullName evidence="1">Holo-[acyl-carrier-protein] synthase</fullName>
        <shortName evidence="1">Holo-ACP synthase</shortName>
        <ecNumber evidence="1">2.7.8.7</ecNumber>
    </recommendedName>
    <alternativeName>
        <fullName evidence="1">4'-phosphopantetheinyl transferase AcpS</fullName>
    </alternativeName>
</protein>
<gene>
    <name evidence="1" type="primary">acpS</name>
    <name type="ordered locus">GSU1803</name>
</gene>
<feature type="chain" id="PRO_0000175651" description="Holo-[acyl-carrier-protein] synthase">
    <location>
        <begin position="1"/>
        <end position="126"/>
    </location>
</feature>
<feature type="binding site" evidence="1">
    <location>
        <position position="8"/>
    </location>
    <ligand>
        <name>Mg(2+)</name>
        <dbReference type="ChEBI" id="CHEBI:18420"/>
    </ligand>
</feature>
<feature type="binding site" evidence="1">
    <location>
        <position position="57"/>
    </location>
    <ligand>
        <name>Mg(2+)</name>
        <dbReference type="ChEBI" id="CHEBI:18420"/>
    </ligand>
</feature>
<comment type="function">
    <text evidence="1">Transfers the 4'-phosphopantetheine moiety from coenzyme A to a Ser of acyl-carrier-protein.</text>
</comment>
<comment type="catalytic activity">
    <reaction evidence="1">
        <text>apo-[ACP] + CoA = holo-[ACP] + adenosine 3',5'-bisphosphate + H(+)</text>
        <dbReference type="Rhea" id="RHEA:12068"/>
        <dbReference type="Rhea" id="RHEA-COMP:9685"/>
        <dbReference type="Rhea" id="RHEA-COMP:9690"/>
        <dbReference type="ChEBI" id="CHEBI:15378"/>
        <dbReference type="ChEBI" id="CHEBI:29999"/>
        <dbReference type="ChEBI" id="CHEBI:57287"/>
        <dbReference type="ChEBI" id="CHEBI:58343"/>
        <dbReference type="ChEBI" id="CHEBI:64479"/>
        <dbReference type="EC" id="2.7.8.7"/>
    </reaction>
</comment>
<comment type="cofactor">
    <cofactor evidence="1">
        <name>Mg(2+)</name>
        <dbReference type="ChEBI" id="CHEBI:18420"/>
    </cofactor>
</comment>
<comment type="subcellular location">
    <subcellularLocation>
        <location evidence="1">Cytoplasm</location>
    </subcellularLocation>
</comment>
<comment type="similarity">
    <text evidence="1">Belongs to the P-Pant transferase superfamily. AcpS family.</text>
</comment>
<name>ACPS_GEOSL</name>
<reference key="1">
    <citation type="journal article" date="2003" name="Science">
        <title>Genome of Geobacter sulfurreducens: metal reduction in subsurface environments.</title>
        <authorList>
            <person name="Methe B.A."/>
            <person name="Nelson K.E."/>
            <person name="Eisen J.A."/>
            <person name="Paulsen I.T."/>
            <person name="Nelson W.C."/>
            <person name="Heidelberg J.F."/>
            <person name="Wu D."/>
            <person name="Wu M."/>
            <person name="Ward N.L."/>
            <person name="Beanan M.J."/>
            <person name="Dodson R.J."/>
            <person name="Madupu R."/>
            <person name="Brinkac L.M."/>
            <person name="Daugherty S.C."/>
            <person name="DeBoy R.T."/>
            <person name="Durkin A.S."/>
            <person name="Gwinn M.L."/>
            <person name="Kolonay J.F."/>
            <person name="Sullivan S.A."/>
            <person name="Haft D.H."/>
            <person name="Selengut J."/>
            <person name="Davidsen T.M."/>
            <person name="Zafar N."/>
            <person name="White O."/>
            <person name="Tran B."/>
            <person name="Romero C."/>
            <person name="Forberger H.A."/>
            <person name="Weidman J.F."/>
            <person name="Khouri H.M."/>
            <person name="Feldblyum T.V."/>
            <person name="Utterback T.R."/>
            <person name="Van Aken S.E."/>
            <person name="Lovley D.R."/>
            <person name="Fraser C.M."/>
        </authorList>
    </citation>
    <scope>NUCLEOTIDE SEQUENCE [LARGE SCALE GENOMIC DNA]</scope>
    <source>
        <strain>ATCC 51573 / DSM 12127 / PCA</strain>
    </source>
</reference>
<keyword id="KW-0963">Cytoplasm</keyword>
<keyword id="KW-0275">Fatty acid biosynthesis</keyword>
<keyword id="KW-0276">Fatty acid metabolism</keyword>
<keyword id="KW-0444">Lipid biosynthesis</keyword>
<keyword id="KW-0443">Lipid metabolism</keyword>
<keyword id="KW-0460">Magnesium</keyword>
<keyword id="KW-0479">Metal-binding</keyword>
<keyword id="KW-1185">Reference proteome</keyword>
<keyword id="KW-0808">Transferase</keyword>
<dbReference type="EC" id="2.7.8.7" evidence="1"/>
<dbReference type="EMBL" id="AE017180">
    <property type="protein sequence ID" value="AAR35180.1"/>
    <property type="molecule type" value="Genomic_DNA"/>
</dbReference>
<dbReference type="RefSeq" id="NP_952853.1">
    <property type="nucleotide sequence ID" value="NC_002939.5"/>
</dbReference>
<dbReference type="RefSeq" id="WP_010942448.1">
    <property type="nucleotide sequence ID" value="NC_002939.5"/>
</dbReference>
<dbReference type="SMR" id="Q74C71"/>
<dbReference type="FunCoup" id="Q74C71">
    <property type="interactions" value="158"/>
</dbReference>
<dbReference type="STRING" id="243231.GSU1803"/>
<dbReference type="EnsemblBacteria" id="AAR35180">
    <property type="protein sequence ID" value="AAR35180"/>
    <property type="gene ID" value="GSU1803"/>
</dbReference>
<dbReference type="KEGG" id="gsu:GSU1803"/>
<dbReference type="PATRIC" id="fig|243231.5.peg.1841"/>
<dbReference type="eggNOG" id="COG0736">
    <property type="taxonomic scope" value="Bacteria"/>
</dbReference>
<dbReference type="HOGENOM" id="CLU_089696_3_1_7"/>
<dbReference type="InParanoid" id="Q74C71"/>
<dbReference type="OrthoDB" id="517356at2"/>
<dbReference type="Proteomes" id="UP000000577">
    <property type="component" value="Chromosome"/>
</dbReference>
<dbReference type="GO" id="GO:0005737">
    <property type="term" value="C:cytoplasm"/>
    <property type="evidence" value="ECO:0007669"/>
    <property type="project" value="UniProtKB-SubCell"/>
</dbReference>
<dbReference type="GO" id="GO:0008897">
    <property type="term" value="F:holo-[acyl-carrier-protein] synthase activity"/>
    <property type="evidence" value="ECO:0007669"/>
    <property type="project" value="UniProtKB-UniRule"/>
</dbReference>
<dbReference type="GO" id="GO:0000287">
    <property type="term" value="F:magnesium ion binding"/>
    <property type="evidence" value="ECO:0007669"/>
    <property type="project" value="UniProtKB-UniRule"/>
</dbReference>
<dbReference type="GO" id="GO:0006633">
    <property type="term" value="P:fatty acid biosynthetic process"/>
    <property type="evidence" value="ECO:0007669"/>
    <property type="project" value="UniProtKB-UniRule"/>
</dbReference>
<dbReference type="Gene3D" id="3.90.470.20">
    <property type="entry name" value="4'-phosphopantetheinyl transferase domain"/>
    <property type="match status" value="1"/>
</dbReference>
<dbReference type="HAMAP" id="MF_00101">
    <property type="entry name" value="AcpS"/>
    <property type="match status" value="1"/>
</dbReference>
<dbReference type="InterPro" id="IPR008278">
    <property type="entry name" value="4-PPantetheinyl_Trfase_dom"/>
</dbReference>
<dbReference type="InterPro" id="IPR037143">
    <property type="entry name" value="4-PPantetheinyl_Trfase_dom_sf"/>
</dbReference>
<dbReference type="InterPro" id="IPR002582">
    <property type="entry name" value="ACPS"/>
</dbReference>
<dbReference type="InterPro" id="IPR004568">
    <property type="entry name" value="Ppantetheine-prot_Trfase_dom"/>
</dbReference>
<dbReference type="NCBIfam" id="TIGR00516">
    <property type="entry name" value="acpS"/>
    <property type="match status" value="1"/>
</dbReference>
<dbReference type="NCBIfam" id="TIGR00556">
    <property type="entry name" value="pantethn_trn"/>
    <property type="match status" value="1"/>
</dbReference>
<dbReference type="NCBIfam" id="NF000832">
    <property type="entry name" value="PRK00070.3-2"/>
    <property type="match status" value="1"/>
</dbReference>
<dbReference type="NCBIfam" id="NF011250">
    <property type="entry name" value="PRK14656.1"/>
    <property type="match status" value="1"/>
</dbReference>
<dbReference type="Pfam" id="PF01648">
    <property type="entry name" value="ACPS"/>
    <property type="match status" value="1"/>
</dbReference>
<dbReference type="SUPFAM" id="SSF56214">
    <property type="entry name" value="4'-phosphopantetheinyl transferase"/>
    <property type="match status" value="1"/>
</dbReference>
<evidence type="ECO:0000255" key="1">
    <source>
        <dbReference type="HAMAP-Rule" id="MF_00101"/>
    </source>
</evidence>